<keyword id="KW-0963">Cytoplasm</keyword>
<keyword id="KW-0489">Methyltransferase</keyword>
<keyword id="KW-1185">Reference proteome</keyword>
<keyword id="KW-0698">rRNA processing</keyword>
<keyword id="KW-0949">S-adenosyl-L-methionine</keyword>
<keyword id="KW-0808">Transferase</keyword>
<gene>
    <name evidence="1" type="primary">rsmH</name>
    <name type="synonym">mraW</name>
    <name type="ordered locus">sync_2647</name>
</gene>
<accession>Q0I6T7</accession>
<dbReference type="EC" id="2.1.1.199" evidence="1"/>
<dbReference type="EMBL" id="CP000435">
    <property type="protein sequence ID" value="ABI46993.1"/>
    <property type="molecule type" value="Genomic_DNA"/>
</dbReference>
<dbReference type="RefSeq" id="WP_011620539.1">
    <property type="nucleotide sequence ID" value="NC_008319.1"/>
</dbReference>
<dbReference type="SMR" id="Q0I6T7"/>
<dbReference type="STRING" id="64471.sync_2647"/>
<dbReference type="KEGG" id="syg:sync_2647"/>
<dbReference type="eggNOG" id="COG0275">
    <property type="taxonomic scope" value="Bacteria"/>
</dbReference>
<dbReference type="HOGENOM" id="CLU_038422_3_0_3"/>
<dbReference type="OrthoDB" id="9806637at2"/>
<dbReference type="Proteomes" id="UP000001961">
    <property type="component" value="Chromosome"/>
</dbReference>
<dbReference type="GO" id="GO:0005737">
    <property type="term" value="C:cytoplasm"/>
    <property type="evidence" value="ECO:0007669"/>
    <property type="project" value="UniProtKB-SubCell"/>
</dbReference>
<dbReference type="GO" id="GO:0071424">
    <property type="term" value="F:rRNA (cytosine-N4-)-methyltransferase activity"/>
    <property type="evidence" value="ECO:0007669"/>
    <property type="project" value="UniProtKB-UniRule"/>
</dbReference>
<dbReference type="GO" id="GO:0070475">
    <property type="term" value="P:rRNA base methylation"/>
    <property type="evidence" value="ECO:0007669"/>
    <property type="project" value="UniProtKB-UniRule"/>
</dbReference>
<dbReference type="Gene3D" id="1.10.150.170">
    <property type="entry name" value="Putative methyltransferase TM0872, insert domain"/>
    <property type="match status" value="1"/>
</dbReference>
<dbReference type="Gene3D" id="3.40.50.150">
    <property type="entry name" value="Vaccinia Virus protein VP39"/>
    <property type="match status" value="1"/>
</dbReference>
<dbReference type="HAMAP" id="MF_01007">
    <property type="entry name" value="16SrRNA_methyltr_H"/>
    <property type="match status" value="1"/>
</dbReference>
<dbReference type="InterPro" id="IPR002903">
    <property type="entry name" value="RsmH"/>
</dbReference>
<dbReference type="InterPro" id="IPR023397">
    <property type="entry name" value="SAM-dep_MeTrfase_MraW_recog"/>
</dbReference>
<dbReference type="InterPro" id="IPR029063">
    <property type="entry name" value="SAM-dependent_MTases_sf"/>
</dbReference>
<dbReference type="NCBIfam" id="TIGR00006">
    <property type="entry name" value="16S rRNA (cytosine(1402)-N(4))-methyltransferase RsmH"/>
    <property type="match status" value="1"/>
</dbReference>
<dbReference type="PANTHER" id="PTHR11265:SF0">
    <property type="entry name" value="12S RRNA N4-METHYLCYTIDINE METHYLTRANSFERASE"/>
    <property type="match status" value="1"/>
</dbReference>
<dbReference type="PANTHER" id="PTHR11265">
    <property type="entry name" value="S-ADENOSYL-METHYLTRANSFERASE MRAW"/>
    <property type="match status" value="1"/>
</dbReference>
<dbReference type="Pfam" id="PF01795">
    <property type="entry name" value="Methyltransf_5"/>
    <property type="match status" value="1"/>
</dbReference>
<dbReference type="PIRSF" id="PIRSF004486">
    <property type="entry name" value="MraW"/>
    <property type="match status" value="1"/>
</dbReference>
<dbReference type="SUPFAM" id="SSF81799">
    <property type="entry name" value="Putative methyltransferase TM0872, insert domain"/>
    <property type="match status" value="1"/>
</dbReference>
<dbReference type="SUPFAM" id="SSF53335">
    <property type="entry name" value="S-adenosyl-L-methionine-dependent methyltransferases"/>
    <property type="match status" value="1"/>
</dbReference>
<protein>
    <recommendedName>
        <fullName evidence="1">Ribosomal RNA small subunit methyltransferase H</fullName>
        <ecNumber evidence="1">2.1.1.199</ecNumber>
    </recommendedName>
    <alternativeName>
        <fullName evidence="1">16S rRNA m(4)C1402 methyltransferase</fullName>
    </alternativeName>
    <alternativeName>
        <fullName evidence="1">rRNA (cytosine-N(4)-)-methyltransferase RsmH</fullName>
    </alternativeName>
</protein>
<name>RSMH_SYNS3</name>
<feature type="chain" id="PRO_0000387179" description="Ribosomal RNA small subunit methyltransferase H">
    <location>
        <begin position="1"/>
        <end position="310"/>
    </location>
</feature>
<feature type="region of interest" description="Disordered" evidence="2">
    <location>
        <begin position="275"/>
        <end position="310"/>
    </location>
</feature>
<feature type="compositionally biased region" description="Basic and acidic residues" evidence="2">
    <location>
        <begin position="301"/>
        <end position="310"/>
    </location>
</feature>
<feature type="binding site" evidence="1">
    <location>
        <begin position="47"/>
        <end position="49"/>
    </location>
    <ligand>
        <name>S-adenosyl-L-methionine</name>
        <dbReference type="ChEBI" id="CHEBI:59789"/>
    </ligand>
</feature>
<feature type="binding site" evidence="1">
    <location>
        <position position="66"/>
    </location>
    <ligand>
        <name>S-adenosyl-L-methionine</name>
        <dbReference type="ChEBI" id="CHEBI:59789"/>
    </ligand>
</feature>
<feature type="binding site" evidence="1">
    <location>
        <position position="93"/>
    </location>
    <ligand>
        <name>S-adenosyl-L-methionine</name>
        <dbReference type="ChEBI" id="CHEBI:59789"/>
    </ligand>
</feature>
<feature type="binding site" evidence="1">
    <location>
        <position position="108"/>
    </location>
    <ligand>
        <name>S-adenosyl-L-methionine</name>
        <dbReference type="ChEBI" id="CHEBI:59789"/>
    </ligand>
</feature>
<feature type="binding site" evidence="1">
    <location>
        <position position="115"/>
    </location>
    <ligand>
        <name>S-adenosyl-L-methionine</name>
        <dbReference type="ChEBI" id="CHEBI:59789"/>
    </ligand>
</feature>
<reference key="1">
    <citation type="journal article" date="2006" name="Proc. Natl. Acad. Sci. U.S.A.">
        <title>Genome sequence of Synechococcus CC9311: insights into adaptation to a coastal environment.</title>
        <authorList>
            <person name="Palenik B."/>
            <person name="Ren Q."/>
            <person name="Dupont C.L."/>
            <person name="Myers G.S."/>
            <person name="Heidelberg J.F."/>
            <person name="Badger J.H."/>
            <person name="Madupu R."/>
            <person name="Nelson W.C."/>
            <person name="Brinkac L.M."/>
            <person name="Dodson R.J."/>
            <person name="Durkin A.S."/>
            <person name="Daugherty S.C."/>
            <person name="Sullivan S.A."/>
            <person name="Khouri H."/>
            <person name="Mohamoud Y."/>
            <person name="Halpin R."/>
            <person name="Paulsen I.T."/>
        </authorList>
    </citation>
    <scope>NUCLEOTIDE SEQUENCE [LARGE SCALE GENOMIC DNA]</scope>
    <source>
        <strain>CC9311</strain>
    </source>
</reference>
<sequence length="310" mass="33793">MPDHPLSSGVAFSHVPVLAETLMQVLSEQPPILWQNTAVIDATLGGGGHSKLILERFPGVRLVGLDQDPSARAAAASRLEPFLDRVQIVPVNFAAFEPPEPVSLVLADLGVSSPQLDVASRGFSFRLDGPLDMRMNPVAGGETAEEMIARLDVNALADLIYAFGEERLSRRIARRIKADLEAEGAYAGTAALAYAVAGCYPPKARRGRIHPATRTFQALRIAVNDELGVLDRLLQTAPGWLKPGGVLAIISFHSLEDRRVKTAFLQEERLERVTRKPFMASEQEQADNPRSRSAKLRIARRRPDTARSGP</sequence>
<organism>
    <name type="scientific">Synechococcus sp. (strain CC9311)</name>
    <dbReference type="NCBI Taxonomy" id="64471"/>
    <lineage>
        <taxon>Bacteria</taxon>
        <taxon>Bacillati</taxon>
        <taxon>Cyanobacteriota</taxon>
        <taxon>Cyanophyceae</taxon>
        <taxon>Synechococcales</taxon>
        <taxon>Synechococcaceae</taxon>
        <taxon>Synechococcus</taxon>
    </lineage>
</organism>
<proteinExistence type="inferred from homology"/>
<evidence type="ECO:0000255" key="1">
    <source>
        <dbReference type="HAMAP-Rule" id="MF_01007"/>
    </source>
</evidence>
<evidence type="ECO:0000256" key="2">
    <source>
        <dbReference type="SAM" id="MobiDB-lite"/>
    </source>
</evidence>
<comment type="function">
    <text evidence="1">Specifically methylates the N4 position of cytidine in position 1402 (C1402) of 16S rRNA.</text>
</comment>
<comment type="catalytic activity">
    <reaction evidence="1">
        <text>cytidine(1402) in 16S rRNA + S-adenosyl-L-methionine = N(4)-methylcytidine(1402) in 16S rRNA + S-adenosyl-L-homocysteine + H(+)</text>
        <dbReference type="Rhea" id="RHEA:42928"/>
        <dbReference type="Rhea" id="RHEA-COMP:10286"/>
        <dbReference type="Rhea" id="RHEA-COMP:10287"/>
        <dbReference type="ChEBI" id="CHEBI:15378"/>
        <dbReference type="ChEBI" id="CHEBI:57856"/>
        <dbReference type="ChEBI" id="CHEBI:59789"/>
        <dbReference type="ChEBI" id="CHEBI:74506"/>
        <dbReference type="ChEBI" id="CHEBI:82748"/>
        <dbReference type="EC" id="2.1.1.199"/>
    </reaction>
</comment>
<comment type="subcellular location">
    <subcellularLocation>
        <location evidence="1">Cytoplasm</location>
    </subcellularLocation>
</comment>
<comment type="similarity">
    <text evidence="1">Belongs to the methyltransferase superfamily. RsmH family.</text>
</comment>